<proteinExistence type="evidence at protein level"/>
<keyword id="KW-0274">FAD</keyword>
<keyword id="KW-0285">Flavoprotein</keyword>
<keyword id="KW-0472">Membrane</keyword>
<keyword id="KW-0560">Oxidoreductase</keyword>
<keyword id="KW-1185">Reference proteome</keyword>
<keyword id="KW-0812">Transmembrane</keyword>
<keyword id="KW-1133">Transmembrane helix</keyword>
<gene>
    <name type="primary">FAO3</name>
    <name type="ordered locus">At3g23410</name>
    <name type="ORF">MLM24.14</name>
    <name type="ORF">MLM24.23</name>
</gene>
<protein>
    <recommendedName>
        <fullName>Long-chain-alcohol oxidase FAO3</fullName>
        <ecNumber>1.1.3.20</ecNumber>
    </recommendedName>
    <alternativeName>
        <fullName>Long-chain fatty alcohol oxidase 3</fullName>
    </alternativeName>
</protein>
<sequence length="746" mass="81389">MDKYKVAGKFGLPDITVAEMESLASFCEAVLPSVQPPPEELSGEGDNHRNKEALRSFYSTSGSKTPVLRQSIELVTKRGTIEAYIATRLILFLLATRLGTLLICGTECLVSRWPFVEKFSELSLEKRERVLQKQFKNWILTPIRAAFVYIKVAFLFCFFSRVNPNGENPAWEAIGYRVNPDENKPSETHNERPLEKGIVETMEETEQTLLESLAHKGLEAVLDTEHDAIRIKCDVVVVGSGSGGGVAASVLAKSGLKVVVLEKGSYFTPSEHRPFEGPGLDKLYENGGILPSVDGSFMVLAGATVGGGSAVNWSACIKTPKSVLQEWSEDQNIPLFGTKEYLTAMEVVWKRMGVTEKCELESFQNQILRKGCENLGFNVENVPRNSSESHYCGSCGYGCRQGDKKGSDRTWLVDAVGHGAVILTGCKAERFILEKNGSNKGGKQMKCLGVMAKSLNGNIAKMLKIEAKVTVSAGGALLTPPLMISSGLRNRNIGKNLHLHPVLMAWGYFPDKESSNISFKGNSYEGGIITSVSKVLSEDSEVRAIIETPQLGPGSFSVLTPWTSGLDMKKRMARYSRTASLITIVRDRGSGEVKTEGRINYTVDKTDRDNLKAGLRESLRILIAAGAEEVGTHRSDGQRLICKGVNENSIQEFLDSVSTEEGAKGMTEKWNVYSSAHQMGSCRIGENEKEGAIDLNGESWEAEKLFVCDASALPSAVGVNPMITVMSTAYCISTRIAKSMTTGLSH</sequence>
<name>FAO3_ARATH</name>
<organism>
    <name type="scientific">Arabidopsis thaliana</name>
    <name type="common">Mouse-ear cress</name>
    <dbReference type="NCBI Taxonomy" id="3702"/>
    <lineage>
        <taxon>Eukaryota</taxon>
        <taxon>Viridiplantae</taxon>
        <taxon>Streptophyta</taxon>
        <taxon>Embryophyta</taxon>
        <taxon>Tracheophyta</taxon>
        <taxon>Spermatophyta</taxon>
        <taxon>Magnoliopsida</taxon>
        <taxon>eudicotyledons</taxon>
        <taxon>Gunneridae</taxon>
        <taxon>Pentapetalae</taxon>
        <taxon>rosids</taxon>
        <taxon>malvids</taxon>
        <taxon>Brassicales</taxon>
        <taxon>Brassicaceae</taxon>
        <taxon>Camelineae</taxon>
        <taxon>Arabidopsis</taxon>
    </lineage>
</organism>
<accession>Q9LW56</accession>
<accession>Q8LGV0</accession>
<dbReference type="EC" id="1.1.3.20"/>
<dbReference type="EMBL" id="AB015474">
    <property type="protein sequence ID" value="BAB02285.1"/>
    <property type="molecule type" value="Genomic_DNA"/>
</dbReference>
<dbReference type="EMBL" id="CP002686">
    <property type="protein sequence ID" value="AEE76762.1"/>
    <property type="molecule type" value="Genomic_DNA"/>
</dbReference>
<dbReference type="EMBL" id="AF361827">
    <property type="protein sequence ID" value="AAK32839.1"/>
    <property type="molecule type" value="mRNA"/>
</dbReference>
<dbReference type="EMBL" id="BT002713">
    <property type="protein sequence ID" value="AAO11629.1"/>
    <property type="molecule type" value="mRNA"/>
</dbReference>
<dbReference type="EMBL" id="AJ316230">
    <property type="protein sequence ID" value="CAC87643.1"/>
    <property type="molecule type" value="mRNA"/>
</dbReference>
<dbReference type="RefSeq" id="NP_001325678.1">
    <property type="nucleotide sequence ID" value="NM_001338634.1"/>
</dbReference>
<dbReference type="RefSeq" id="NP_566729.1">
    <property type="nucleotide sequence ID" value="NM_113244.3"/>
</dbReference>
<dbReference type="SMR" id="Q9LW56"/>
<dbReference type="BioGRID" id="7254">
    <property type="interactions" value="20"/>
</dbReference>
<dbReference type="FunCoup" id="Q9LW56">
    <property type="interactions" value="24"/>
</dbReference>
<dbReference type="IntAct" id="Q9LW56">
    <property type="interactions" value="18"/>
</dbReference>
<dbReference type="STRING" id="3702.Q9LW56"/>
<dbReference type="PaxDb" id="3702-AT3G23410.1"/>
<dbReference type="ProteomicsDB" id="230850"/>
<dbReference type="EnsemblPlants" id="AT3G23410.1">
    <property type="protein sequence ID" value="AT3G23410.1"/>
    <property type="gene ID" value="AT3G23410"/>
</dbReference>
<dbReference type="GeneID" id="821922"/>
<dbReference type="Gramene" id="AT3G23410.1">
    <property type="protein sequence ID" value="AT3G23410.1"/>
    <property type="gene ID" value="AT3G23410"/>
</dbReference>
<dbReference type="KEGG" id="ath:AT3G23410"/>
<dbReference type="Araport" id="AT3G23410"/>
<dbReference type="TAIR" id="AT3G23410">
    <property type="gene designation" value="FAO3"/>
</dbReference>
<dbReference type="eggNOG" id="ENOG502QSD8">
    <property type="taxonomic scope" value="Eukaryota"/>
</dbReference>
<dbReference type="HOGENOM" id="CLU_008878_1_1_1"/>
<dbReference type="InParanoid" id="Q9LW56"/>
<dbReference type="OrthoDB" id="269227at2759"/>
<dbReference type="PhylomeDB" id="Q9LW56"/>
<dbReference type="BioCyc" id="ARA:AT3G23410-MONOMER"/>
<dbReference type="BioCyc" id="MetaCyc:AT3G23410-MONOMER"/>
<dbReference type="SABIO-RK" id="Q9LW56"/>
<dbReference type="PRO" id="PR:Q9LW56"/>
<dbReference type="Proteomes" id="UP000006548">
    <property type="component" value="Chromosome 3"/>
</dbReference>
<dbReference type="ExpressionAtlas" id="Q9LW56">
    <property type="expression patterns" value="baseline and differential"/>
</dbReference>
<dbReference type="GO" id="GO:0043231">
    <property type="term" value="C:intracellular membrane-bounded organelle"/>
    <property type="evidence" value="ECO:0000314"/>
    <property type="project" value="TAIR"/>
</dbReference>
<dbReference type="GO" id="GO:0016020">
    <property type="term" value="C:membrane"/>
    <property type="evidence" value="ECO:0007669"/>
    <property type="project" value="UniProtKB-SubCell"/>
</dbReference>
<dbReference type="GO" id="GO:0050660">
    <property type="term" value="F:flavin adenine dinucleotide binding"/>
    <property type="evidence" value="ECO:0007669"/>
    <property type="project" value="InterPro"/>
</dbReference>
<dbReference type="GO" id="GO:0046577">
    <property type="term" value="F:long-chain-alcohol oxidase activity"/>
    <property type="evidence" value="ECO:0000314"/>
    <property type="project" value="UniProtKB"/>
</dbReference>
<dbReference type="GO" id="GO:0006066">
    <property type="term" value="P:alcohol metabolic process"/>
    <property type="evidence" value="ECO:0000314"/>
    <property type="project" value="UniProtKB"/>
</dbReference>
<dbReference type="FunFam" id="3.50.50.60:FF:000527">
    <property type="entry name" value="Long-chain-alcohol oxidase"/>
    <property type="match status" value="1"/>
</dbReference>
<dbReference type="Gene3D" id="3.50.50.60">
    <property type="entry name" value="FAD/NAD(P)-binding domain"/>
    <property type="match status" value="2"/>
</dbReference>
<dbReference type="InterPro" id="IPR003953">
    <property type="entry name" value="FAD-dep_OxRdtase_2_FAD-bd"/>
</dbReference>
<dbReference type="InterPro" id="IPR036188">
    <property type="entry name" value="FAD/NAD-bd_sf"/>
</dbReference>
<dbReference type="InterPro" id="IPR000172">
    <property type="entry name" value="GMC_OxRdtase_N"/>
</dbReference>
<dbReference type="InterPro" id="IPR007867">
    <property type="entry name" value="GMC_OxRtase_C"/>
</dbReference>
<dbReference type="InterPro" id="IPR012400">
    <property type="entry name" value="Long_Oxdase"/>
</dbReference>
<dbReference type="PANTHER" id="PTHR46056">
    <property type="entry name" value="LONG-CHAIN-ALCOHOL OXIDASE"/>
    <property type="match status" value="1"/>
</dbReference>
<dbReference type="PANTHER" id="PTHR46056:SF10">
    <property type="entry name" value="LONG-CHAIN-ALCOHOL OXIDASE FAO3"/>
    <property type="match status" value="1"/>
</dbReference>
<dbReference type="Pfam" id="PF00890">
    <property type="entry name" value="FAD_binding_2"/>
    <property type="match status" value="1"/>
</dbReference>
<dbReference type="Pfam" id="PF05199">
    <property type="entry name" value="GMC_oxred_C"/>
    <property type="match status" value="1"/>
</dbReference>
<dbReference type="Pfam" id="PF00732">
    <property type="entry name" value="GMC_oxred_N"/>
    <property type="match status" value="1"/>
</dbReference>
<dbReference type="PIRSF" id="PIRSF028937">
    <property type="entry name" value="Lg_Ch_AO"/>
    <property type="match status" value="1"/>
</dbReference>
<dbReference type="SUPFAM" id="SSF51905">
    <property type="entry name" value="FAD/NAD(P)-binding domain"/>
    <property type="match status" value="1"/>
</dbReference>
<evidence type="ECO:0000250" key="1">
    <source>
        <dbReference type="UniProtKB" id="E4QP00"/>
    </source>
</evidence>
<evidence type="ECO:0000255" key="2"/>
<evidence type="ECO:0000269" key="3">
    <source>
    </source>
</evidence>
<evidence type="ECO:0000269" key="4">
    <source>
    </source>
</evidence>
<evidence type="ECO:0000305" key="5"/>
<comment type="function">
    <text evidence="3 4">Long-chain fatty alcohol oxidase involved in the omega-oxidation pathway of lipid degradation.</text>
</comment>
<comment type="catalytic activity">
    <reaction evidence="4">
        <text>a long-chain primary fatty alcohol + O2 = a long-chain fatty aldehyde + H2O2</text>
        <dbReference type="Rhea" id="RHEA:22756"/>
        <dbReference type="ChEBI" id="CHEBI:15379"/>
        <dbReference type="ChEBI" id="CHEBI:16240"/>
        <dbReference type="ChEBI" id="CHEBI:17176"/>
        <dbReference type="ChEBI" id="CHEBI:77396"/>
        <dbReference type="EC" id="1.1.3.20"/>
    </reaction>
</comment>
<comment type="biophysicochemical properties">
    <kinetics>
        <KM evidence="4">33.8 uM for 1-dodecanol</KM>
        <KM evidence="4">680 uM for 1-hexadecanol</KM>
        <KM evidence="4">245 uM for 1,16-hexadecandiol</KM>
    </kinetics>
</comment>
<comment type="subcellular location">
    <subcellularLocation>
        <location evidence="3">Membrane</location>
    </subcellularLocation>
</comment>
<comment type="similarity">
    <text evidence="5">Belongs to the GMC oxidoreductase family.</text>
</comment>
<reference key="1">
    <citation type="journal article" date="2000" name="DNA Res.">
        <title>Structural analysis of Arabidopsis thaliana chromosome 3. I. Sequence features of the regions of 4,504,864 bp covered by sixty P1 and TAC clones.</title>
        <authorList>
            <person name="Sato S."/>
            <person name="Nakamura Y."/>
            <person name="Kaneko T."/>
            <person name="Katoh T."/>
            <person name="Asamizu E."/>
            <person name="Tabata S."/>
        </authorList>
    </citation>
    <scope>NUCLEOTIDE SEQUENCE [LARGE SCALE GENOMIC DNA]</scope>
    <source>
        <strain>cv. Columbia</strain>
    </source>
</reference>
<reference key="2">
    <citation type="journal article" date="2017" name="Plant J.">
        <title>Araport11: a complete reannotation of the Arabidopsis thaliana reference genome.</title>
        <authorList>
            <person name="Cheng C.Y."/>
            <person name="Krishnakumar V."/>
            <person name="Chan A.P."/>
            <person name="Thibaud-Nissen F."/>
            <person name="Schobel S."/>
            <person name="Town C.D."/>
        </authorList>
    </citation>
    <scope>GENOME REANNOTATION</scope>
    <source>
        <strain>cv. Columbia</strain>
    </source>
</reference>
<reference key="3">
    <citation type="journal article" date="2003" name="Science">
        <title>Empirical analysis of transcriptional activity in the Arabidopsis genome.</title>
        <authorList>
            <person name="Yamada K."/>
            <person name="Lim J."/>
            <person name="Dale J.M."/>
            <person name="Chen H."/>
            <person name="Shinn P."/>
            <person name="Palm C.J."/>
            <person name="Southwick A.M."/>
            <person name="Wu H.C."/>
            <person name="Kim C.J."/>
            <person name="Nguyen M."/>
            <person name="Pham P.K."/>
            <person name="Cheuk R.F."/>
            <person name="Karlin-Newmann G."/>
            <person name="Liu S.X."/>
            <person name="Lam B."/>
            <person name="Sakano H."/>
            <person name="Wu T."/>
            <person name="Yu G."/>
            <person name="Miranda M."/>
            <person name="Quach H.L."/>
            <person name="Tripp M."/>
            <person name="Chang C.H."/>
            <person name="Lee J.M."/>
            <person name="Toriumi M.J."/>
            <person name="Chan M.M."/>
            <person name="Tang C.C."/>
            <person name="Onodera C.S."/>
            <person name="Deng J.M."/>
            <person name="Akiyama K."/>
            <person name="Ansari Y."/>
            <person name="Arakawa T."/>
            <person name="Banh J."/>
            <person name="Banno F."/>
            <person name="Bowser L."/>
            <person name="Brooks S.Y."/>
            <person name="Carninci P."/>
            <person name="Chao Q."/>
            <person name="Choy N."/>
            <person name="Enju A."/>
            <person name="Goldsmith A.D."/>
            <person name="Gurjal M."/>
            <person name="Hansen N.F."/>
            <person name="Hayashizaki Y."/>
            <person name="Johnson-Hopson C."/>
            <person name="Hsuan V.W."/>
            <person name="Iida K."/>
            <person name="Karnes M."/>
            <person name="Khan S."/>
            <person name="Koesema E."/>
            <person name="Ishida J."/>
            <person name="Jiang P.X."/>
            <person name="Jones T."/>
            <person name="Kawai J."/>
            <person name="Kamiya A."/>
            <person name="Meyers C."/>
            <person name="Nakajima M."/>
            <person name="Narusaka M."/>
            <person name="Seki M."/>
            <person name="Sakurai T."/>
            <person name="Satou M."/>
            <person name="Tamse R."/>
            <person name="Vaysberg M."/>
            <person name="Wallender E.K."/>
            <person name="Wong C."/>
            <person name="Yamamura Y."/>
            <person name="Yuan S."/>
            <person name="Shinozaki K."/>
            <person name="Davis R.W."/>
            <person name="Theologis A."/>
            <person name="Ecker J.R."/>
        </authorList>
    </citation>
    <scope>NUCLEOTIDE SEQUENCE [LARGE SCALE MRNA]</scope>
    <source>
        <strain>cv. Columbia</strain>
    </source>
</reference>
<reference key="4">
    <citation type="journal article" date="2004" name="FEBS Lett.">
        <title>Functional identification of AtFao3, a membrane bound long chain alcohol oxidase in Arabidopsis thaliana.</title>
        <authorList>
            <person name="Cheng Q."/>
            <person name="Liu H.T."/>
            <person name="Bombelli P."/>
            <person name="Smith A."/>
            <person name="Slabas A.R."/>
        </authorList>
    </citation>
    <scope>NUCLEOTIDE SEQUENCE [MRNA] OF 70-746</scope>
    <scope>FUNCTION</scope>
    <scope>SUBCELLULAR LOCATION</scope>
</reference>
<reference key="5">
    <citation type="journal article" date="2000" name="J. Biol. Chem.">
        <title>A consensus sequence for long-chain fatty-acid alcohol oxidases from Candida identifies a family of genes involved in lipid omega-oxidation in yeast with homologues in plants and bacteria.</title>
        <authorList>
            <person name="Vanhanen S."/>
            <person name="West M."/>
            <person name="Kroon J.T."/>
            <person name="Lindner N."/>
            <person name="Casey J."/>
            <person name="Cheng Q."/>
            <person name="Elborough K.M."/>
            <person name="Slabas A.R."/>
        </authorList>
    </citation>
    <scope>IDENTIFICATION</scope>
</reference>
<reference key="6">
    <citation type="journal article" date="2008" name="Biotechnol. Prog.">
        <title>Cloning and characterization of long-chain fatty alcohol oxidase LjFAO1 in lotus japonicus.</title>
        <authorList>
            <person name="Zhao S."/>
            <person name="Lin Z."/>
            <person name="Ma W."/>
            <person name="Luo D."/>
            <person name="Cheng Q."/>
        </authorList>
    </citation>
    <scope>CATALYTIC ACTIVITY</scope>
    <scope>FUNCTION</scope>
    <scope>BIOPHYSICOCHEMICAL PROPERTIES</scope>
</reference>
<feature type="chain" id="PRO_0000395504" description="Long-chain-alcohol oxidase FAO3">
    <location>
        <begin position="1"/>
        <end position="746"/>
    </location>
</feature>
<feature type="transmembrane region" description="Helical" evidence="2">
    <location>
        <begin position="139"/>
        <end position="159"/>
    </location>
</feature>
<feature type="active site" description="Proton acceptor" evidence="1">
    <location>
        <position position="677"/>
    </location>
</feature>
<feature type="binding site" evidence="2">
    <location>
        <begin position="233"/>
        <end position="248"/>
    </location>
    <ligand>
        <name>FAD</name>
        <dbReference type="ChEBI" id="CHEBI:57692"/>
    </ligand>
</feature>